<organism>
    <name type="scientific">Stutzerimonas stutzeri (strain A1501)</name>
    <name type="common">Pseudomonas stutzeri</name>
    <dbReference type="NCBI Taxonomy" id="379731"/>
    <lineage>
        <taxon>Bacteria</taxon>
        <taxon>Pseudomonadati</taxon>
        <taxon>Pseudomonadota</taxon>
        <taxon>Gammaproteobacteria</taxon>
        <taxon>Pseudomonadales</taxon>
        <taxon>Pseudomonadaceae</taxon>
        <taxon>Stutzerimonas</taxon>
    </lineage>
</organism>
<keyword id="KW-0378">Hydrolase</keyword>
<keyword id="KW-0479">Metal-binding</keyword>
<keyword id="KW-0482">Metalloprotease</keyword>
<keyword id="KW-0645">Protease</keyword>
<keyword id="KW-1185">Reference proteome</keyword>
<keyword id="KW-0862">Zinc</keyword>
<name>Y473_STUS1</name>
<evidence type="ECO:0000255" key="1">
    <source>
        <dbReference type="PROSITE-ProRule" id="PRU01182"/>
    </source>
</evidence>
<evidence type="ECO:0000305" key="2"/>
<sequence length="224" mass="24789">MSIRDWPASERPREKLLDQGAAALSDAELLAIFLRTGVAGKSAVDLARYLLAEFGSLRALLEADLDQFSAHLGLGPAKFAQLQAVLEMGRRHLAERLRRDSALESPQAVRDYLKARLRHEPHELFGCLFLDAKHRVLAFEVLFHGTIDGASVYPRQVVKRALAQNAAAVILTHNHPSGVAEPSQADRQLTQRLKDALALIDVRVLDHFIVGDGEPLSMAEYGWM</sequence>
<gene>
    <name type="ordered locus">PST_0473</name>
</gene>
<reference key="1">
    <citation type="journal article" date="2008" name="Proc. Natl. Acad. Sci. U.S.A.">
        <title>Nitrogen fixation island and rhizosphere competence traits in the genome of root-associated Pseudomonas stutzeri A1501.</title>
        <authorList>
            <person name="Yan Y."/>
            <person name="Yang J."/>
            <person name="Dou Y."/>
            <person name="Chen M."/>
            <person name="Ping S."/>
            <person name="Peng J."/>
            <person name="Lu W."/>
            <person name="Zhang W."/>
            <person name="Yao Z."/>
            <person name="Li H."/>
            <person name="Liu W."/>
            <person name="He S."/>
            <person name="Geng L."/>
            <person name="Zhang X."/>
            <person name="Yang F."/>
            <person name="Yu H."/>
            <person name="Zhan Y."/>
            <person name="Li D."/>
            <person name="Lin Z."/>
            <person name="Wang Y."/>
            <person name="Elmerich C."/>
            <person name="Lin M."/>
            <person name="Jin Q."/>
        </authorList>
    </citation>
    <scope>NUCLEOTIDE SEQUENCE [LARGE SCALE GENOMIC DNA]</scope>
    <source>
        <strain>A1501</strain>
    </source>
</reference>
<accession>A4VGS8</accession>
<comment type="similarity">
    <text evidence="2">Belongs to the UPF0758 family.</text>
</comment>
<proteinExistence type="inferred from homology"/>
<protein>
    <recommendedName>
        <fullName>UPF0758 protein PST_0473</fullName>
    </recommendedName>
</protein>
<feature type="chain" id="PRO_1000001684" description="UPF0758 protein PST_0473">
    <location>
        <begin position="1"/>
        <end position="224"/>
    </location>
</feature>
<feature type="domain" description="MPN" evidence="1">
    <location>
        <begin position="102"/>
        <end position="224"/>
    </location>
</feature>
<feature type="short sequence motif" description="JAMM motif" evidence="1">
    <location>
        <begin position="173"/>
        <end position="186"/>
    </location>
</feature>
<feature type="binding site" evidence="1">
    <location>
        <position position="173"/>
    </location>
    <ligand>
        <name>Zn(2+)</name>
        <dbReference type="ChEBI" id="CHEBI:29105"/>
        <note>catalytic</note>
    </ligand>
</feature>
<feature type="binding site" evidence="1">
    <location>
        <position position="175"/>
    </location>
    <ligand>
        <name>Zn(2+)</name>
        <dbReference type="ChEBI" id="CHEBI:29105"/>
        <note>catalytic</note>
    </ligand>
</feature>
<feature type="binding site" evidence="1">
    <location>
        <position position="186"/>
    </location>
    <ligand>
        <name>Zn(2+)</name>
        <dbReference type="ChEBI" id="CHEBI:29105"/>
        <note>catalytic</note>
    </ligand>
</feature>
<dbReference type="EMBL" id="CP000304">
    <property type="protein sequence ID" value="ABP78179.1"/>
    <property type="molecule type" value="Genomic_DNA"/>
</dbReference>
<dbReference type="SMR" id="A4VGS8"/>
<dbReference type="KEGG" id="psa:PST_0473"/>
<dbReference type="eggNOG" id="COG2003">
    <property type="taxonomic scope" value="Bacteria"/>
</dbReference>
<dbReference type="HOGENOM" id="CLU_073529_0_1_6"/>
<dbReference type="Proteomes" id="UP000000233">
    <property type="component" value="Chromosome"/>
</dbReference>
<dbReference type="GO" id="GO:0046872">
    <property type="term" value="F:metal ion binding"/>
    <property type="evidence" value="ECO:0007669"/>
    <property type="project" value="UniProtKB-KW"/>
</dbReference>
<dbReference type="GO" id="GO:0008237">
    <property type="term" value="F:metallopeptidase activity"/>
    <property type="evidence" value="ECO:0007669"/>
    <property type="project" value="UniProtKB-KW"/>
</dbReference>
<dbReference type="GO" id="GO:0006508">
    <property type="term" value="P:proteolysis"/>
    <property type="evidence" value="ECO:0007669"/>
    <property type="project" value="UniProtKB-KW"/>
</dbReference>
<dbReference type="CDD" id="cd08071">
    <property type="entry name" value="MPN_DUF2466"/>
    <property type="match status" value="1"/>
</dbReference>
<dbReference type="FunFam" id="3.40.140.10:FF:000032">
    <property type="entry name" value="DNA repair protein RadC"/>
    <property type="match status" value="1"/>
</dbReference>
<dbReference type="Gene3D" id="1.10.150.20">
    <property type="entry name" value="5' to 3' exonuclease, C-terminal subdomain"/>
    <property type="match status" value="1"/>
</dbReference>
<dbReference type="Gene3D" id="3.40.140.10">
    <property type="entry name" value="Cytidine Deaminase, domain 2"/>
    <property type="match status" value="1"/>
</dbReference>
<dbReference type="InterPro" id="IPR037518">
    <property type="entry name" value="MPN"/>
</dbReference>
<dbReference type="InterPro" id="IPR025657">
    <property type="entry name" value="RadC_JAB"/>
</dbReference>
<dbReference type="InterPro" id="IPR010994">
    <property type="entry name" value="RuvA_2-like"/>
</dbReference>
<dbReference type="InterPro" id="IPR001405">
    <property type="entry name" value="UPF0758"/>
</dbReference>
<dbReference type="InterPro" id="IPR020891">
    <property type="entry name" value="UPF0758_CS"/>
</dbReference>
<dbReference type="InterPro" id="IPR046778">
    <property type="entry name" value="UPF0758_N"/>
</dbReference>
<dbReference type="NCBIfam" id="NF000642">
    <property type="entry name" value="PRK00024.1"/>
    <property type="match status" value="1"/>
</dbReference>
<dbReference type="NCBIfam" id="TIGR00608">
    <property type="entry name" value="radc"/>
    <property type="match status" value="1"/>
</dbReference>
<dbReference type="PANTHER" id="PTHR30471">
    <property type="entry name" value="DNA REPAIR PROTEIN RADC"/>
    <property type="match status" value="1"/>
</dbReference>
<dbReference type="PANTHER" id="PTHR30471:SF3">
    <property type="entry name" value="UPF0758 PROTEIN YEES-RELATED"/>
    <property type="match status" value="1"/>
</dbReference>
<dbReference type="Pfam" id="PF04002">
    <property type="entry name" value="RadC"/>
    <property type="match status" value="1"/>
</dbReference>
<dbReference type="Pfam" id="PF20582">
    <property type="entry name" value="UPF0758_N"/>
    <property type="match status" value="1"/>
</dbReference>
<dbReference type="SUPFAM" id="SSF102712">
    <property type="entry name" value="JAB1/MPN domain"/>
    <property type="match status" value="1"/>
</dbReference>
<dbReference type="SUPFAM" id="SSF47781">
    <property type="entry name" value="RuvA domain 2-like"/>
    <property type="match status" value="1"/>
</dbReference>
<dbReference type="PROSITE" id="PS50249">
    <property type="entry name" value="MPN"/>
    <property type="match status" value="1"/>
</dbReference>
<dbReference type="PROSITE" id="PS01302">
    <property type="entry name" value="UPF0758"/>
    <property type="match status" value="1"/>
</dbReference>